<organism>
    <name type="scientific">Escherichia coli O157:H7 (strain EC4115 / EHEC)</name>
    <dbReference type="NCBI Taxonomy" id="444450"/>
    <lineage>
        <taxon>Bacteria</taxon>
        <taxon>Pseudomonadati</taxon>
        <taxon>Pseudomonadota</taxon>
        <taxon>Gammaproteobacteria</taxon>
        <taxon>Enterobacterales</taxon>
        <taxon>Enterobacteriaceae</taxon>
        <taxon>Escherichia</taxon>
    </lineage>
</organism>
<protein>
    <recommendedName>
        <fullName evidence="1">5'-deoxynucleotidase YfbR</fullName>
        <ecNumber evidence="1">3.1.3.89</ecNumber>
    </recommendedName>
    <alternativeName>
        <fullName evidence="1">5'-deoxyribonucleotidase</fullName>
    </alternativeName>
    <alternativeName>
        <fullName evidence="1">Nucleoside 5'-monophosphate phosphohydrolase</fullName>
    </alternativeName>
</protein>
<name>5DNU_ECO5E</name>
<sequence length="199" mass="22694">MKQSHFFAHLSRLKLINRWPLMRNVRTENVSEHSLQVAMVAHALAAIKNRKFGGNVNAERIALLAMYHDASEVLTGDLPTPVKYFNSQIAQEYKAIEKIAQQKLVDMVPEELRDIFAPLIDEHAYSDEEKSLVKQADALCAYLKCLEELAAGNNEFLLAKTRLEATLEARRSQEMDYFMEVFVPSFHLSLDEISQDSPL</sequence>
<reference key="1">
    <citation type="journal article" date="2011" name="Proc. Natl. Acad. Sci. U.S.A.">
        <title>Genomic anatomy of Escherichia coli O157:H7 outbreaks.</title>
        <authorList>
            <person name="Eppinger M."/>
            <person name="Mammel M.K."/>
            <person name="Leclerc J.E."/>
            <person name="Ravel J."/>
            <person name="Cebula T.A."/>
        </authorList>
    </citation>
    <scope>NUCLEOTIDE SEQUENCE [LARGE SCALE GENOMIC DNA]</scope>
    <source>
        <strain>EC4115 / EHEC</strain>
    </source>
</reference>
<evidence type="ECO:0000255" key="1">
    <source>
        <dbReference type="HAMAP-Rule" id="MF_01100"/>
    </source>
</evidence>
<evidence type="ECO:0000255" key="2">
    <source>
        <dbReference type="PROSITE-ProRule" id="PRU01175"/>
    </source>
</evidence>
<proteinExistence type="inferred from homology"/>
<accession>B5YXT1</accession>
<comment type="function">
    <text evidence="1">Catalyzes the strictly specific dephosphorylation of 2'-deoxyribonucleoside 5'-monophosphates.</text>
</comment>
<comment type="catalytic activity">
    <reaction evidence="1">
        <text>a 2'-deoxyribonucleoside 5'-phosphate + H2O = a 2'-deoxyribonucleoside + phosphate</text>
        <dbReference type="Rhea" id="RHEA:36167"/>
        <dbReference type="ChEBI" id="CHEBI:15377"/>
        <dbReference type="ChEBI" id="CHEBI:18274"/>
        <dbReference type="ChEBI" id="CHEBI:43474"/>
        <dbReference type="ChEBI" id="CHEBI:65317"/>
        <dbReference type="EC" id="3.1.3.89"/>
    </reaction>
</comment>
<comment type="cofactor">
    <cofactor evidence="1">
        <name>a divalent metal cation</name>
        <dbReference type="ChEBI" id="CHEBI:60240"/>
    </cofactor>
</comment>
<comment type="subunit">
    <text evidence="1">Homodimer.</text>
</comment>
<comment type="subcellular location">
    <subcellularLocation>
        <location evidence="1">Cytoplasm</location>
    </subcellularLocation>
</comment>
<comment type="similarity">
    <text evidence="1">Belongs to the 5DNU family.</text>
</comment>
<gene>
    <name evidence="1" type="primary">yfbR</name>
    <name type="ordered locus">ECH74115_3430</name>
</gene>
<feature type="chain" id="PRO_1000136962" description="5'-deoxynucleotidase YfbR">
    <location>
        <begin position="1"/>
        <end position="199"/>
    </location>
</feature>
<feature type="domain" description="HD" evidence="2">
    <location>
        <begin position="30"/>
        <end position="142"/>
    </location>
</feature>
<feature type="binding site" evidence="1">
    <location>
        <begin position="18"/>
        <end position="19"/>
    </location>
    <ligand>
        <name>substrate</name>
    </ligand>
</feature>
<feature type="binding site" evidence="1">
    <location>
        <position position="33"/>
    </location>
    <ligand>
        <name>a divalent metal cation</name>
        <dbReference type="ChEBI" id="CHEBI:60240"/>
    </ligand>
</feature>
<feature type="binding site" evidence="1">
    <location>
        <position position="33"/>
    </location>
    <ligand>
        <name>substrate</name>
    </ligand>
</feature>
<feature type="binding site" evidence="1">
    <location>
        <position position="68"/>
    </location>
    <ligand>
        <name>a divalent metal cation</name>
        <dbReference type="ChEBI" id="CHEBI:60240"/>
    </ligand>
</feature>
<feature type="binding site" evidence="1">
    <location>
        <position position="69"/>
    </location>
    <ligand>
        <name>a divalent metal cation</name>
        <dbReference type="ChEBI" id="CHEBI:60240"/>
    </ligand>
</feature>
<feature type="binding site" evidence="1">
    <location>
        <position position="69"/>
    </location>
    <ligand>
        <name>substrate</name>
    </ligand>
</feature>
<feature type="binding site" evidence="1">
    <location>
        <begin position="77"/>
        <end position="80"/>
    </location>
    <ligand>
        <name>substrate</name>
    </ligand>
</feature>
<feature type="binding site" evidence="1">
    <location>
        <position position="137"/>
    </location>
    <ligand>
        <name>a divalent metal cation</name>
        <dbReference type="ChEBI" id="CHEBI:60240"/>
    </ligand>
</feature>
<feature type="binding site" evidence="1">
    <location>
        <position position="137"/>
    </location>
    <ligand>
        <name>substrate</name>
    </ligand>
</feature>
<feature type="site" description="Appears to be important in orienting the phosphate for catalysis" evidence="1">
    <location>
        <position position="18"/>
    </location>
</feature>
<keyword id="KW-0963">Cytoplasm</keyword>
<keyword id="KW-0378">Hydrolase</keyword>
<keyword id="KW-0479">Metal-binding</keyword>
<keyword id="KW-0547">Nucleotide-binding</keyword>
<dbReference type="EC" id="3.1.3.89" evidence="1"/>
<dbReference type="EMBL" id="CP001164">
    <property type="protein sequence ID" value="ACI36668.1"/>
    <property type="molecule type" value="Genomic_DNA"/>
</dbReference>
<dbReference type="RefSeq" id="WP_000813860.1">
    <property type="nucleotide sequence ID" value="NC_011353.1"/>
</dbReference>
<dbReference type="SMR" id="B5YXT1"/>
<dbReference type="GeneID" id="93774883"/>
<dbReference type="KEGG" id="ecf:ECH74115_3430"/>
<dbReference type="HOGENOM" id="CLU_084784_0_0_6"/>
<dbReference type="GO" id="GO:0005737">
    <property type="term" value="C:cytoplasm"/>
    <property type="evidence" value="ECO:0007669"/>
    <property type="project" value="UniProtKB-SubCell"/>
</dbReference>
<dbReference type="GO" id="GO:0002953">
    <property type="term" value="F:5'-deoxynucleotidase activity"/>
    <property type="evidence" value="ECO:0007669"/>
    <property type="project" value="UniProtKB-EC"/>
</dbReference>
<dbReference type="GO" id="GO:0046872">
    <property type="term" value="F:metal ion binding"/>
    <property type="evidence" value="ECO:0007669"/>
    <property type="project" value="UniProtKB-KW"/>
</dbReference>
<dbReference type="GO" id="GO:0000166">
    <property type="term" value="F:nucleotide binding"/>
    <property type="evidence" value="ECO:0007669"/>
    <property type="project" value="UniProtKB-KW"/>
</dbReference>
<dbReference type="CDD" id="cd00077">
    <property type="entry name" value="HDc"/>
    <property type="match status" value="1"/>
</dbReference>
<dbReference type="FunFam" id="1.10.3210.10:FF:000002">
    <property type="entry name" value="Nucleotidase YfbR"/>
    <property type="match status" value="1"/>
</dbReference>
<dbReference type="Gene3D" id="1.10.3210.10">
    <property type="entry name" value="Hypothetical protein af1432"/>
    <property type="match status" value="1"/>
</dbReference>
<dbReference type="HAMAP" id="MF_01100">
    <property type="entry name" value="5DNU"/>
    <property type="match status" value="1"/>
</dbReference>
<dbReference type="InterPro" id="IPR003607">
    <property type="entry name" value="HD/PDEase_dom"/>
</dbReference>
<dbReference type="InterPro" id="IPR006674">
    <property type="entry name" value="HD_domain"/>
</dbReference>
<dbReference type="InterPro" id="IPR022971">
    <property type="entry name" value="YfbR"/>
</dbReference>
<dbReference type="InterPro" id="IPR039356">
    <property type="entry name" value="YfbR/HDDC2"/>
</dbReference>
<dbReference type="NCBIfam" id="NF003009">
    <property type="entry name" value="PRK03826.1"/>
    <property type="match status" value="1"/>
</dbReference>
<dbReference type="PANTHER" id="PTHR11845">
    <property type="entry name" value="5'-DEOXYNUCLEOTIDASE HDDC2"/>
    <property type="match status" value="1"/>
</dbReference>
<dbReference type="PANTHER" id="PTHR11845:SF13">
    <property type="entry name" value="5'-DEOXYNUCLEOTIDASE HDDC2"/>
    <property type="match status" value="1"/>
</dbReference>
<dbReference type="Pfam" id="PF12917">
    <property type="entry name" value="YfbR-like"/>
    <property type="match status" value="1"/>
</dbReference>
<dbReference type="SMART" id="SM00471">
    <property type="entry name" value="HDc"/>
    <property type="match status" value="1"/>
</dbReference>
<dbReference type="SUPFAM" id="SSF109604">
    <property type="entry name" value="HD-domain/PDEase-like"/>
    <property type="match status" value="1"/>
</dbReference>
<dbReference type="PROSITE" id="PS51831">
    <property type="entry name" value="HD"/>
    <property type="match status" value="1"/>
</dbReference>